<evidence type="ECO:0000256" key="1">
    <source>
        <dbReference type="SAM" id="MobiDB-lite"/>
    </source>
</evidence>
<evidence type="ECO:0000269" key="2">
    <source>
    </source>
</evidence>
<evidence type="ECO:0000303" key="3">
    <source>
    </source>
</evidence>
<evidence type="ECO:0000303" key="4">
    <source>
    </source>
</evidence>
<evidence type="ECO:0000303" key="5">
    <source>
    </source>
</evidence>
<evidence type="ECO:0000303" key="6">
    <source ref="4"/>
</evidence>
<evidence type="ECO:0000303" key="7">
    <source ref="8"/>
</evidence>
<evidence type="ECO:0000305" key="8"/>
<accession>P19351</accession>
<accession>E1JJP1</accession>
<accession>E1JJP2</accession>
<accession>E1JJP3</accession>
<accession>E4NKN4</accession>
<accession>F2FB91</accession>
<accession>Q59E46</accession>
<accession>Q59E47</accession>
<accession>Q6T2Y5</accession>
<accession>Q6T2Y6</accession>
<accession>Q6T2Y7</accession>
<accession>Q6T2Y8</accession>
<accession>Q6T2Y9</accession>
<accession>Q8SZI3</accession>
<accession>Q960L9</accession>
<accession>Q9VYB3</accession>
<accession>Q9VYB4</accession>
<accession>Q9VYB5</accession>
<feature type="chain" id="PRO_0000186185" description="Troponin T, skeletal muscle">
    <location>
        <begin position="1"/>
        <end position="397"/>
    </location>
</feature>
<feature type="region of interest" description="Disordered" evidence="1">
    <location>
        <begin position="1"/>
        <end position="148"/>
    </location>
</feature>
<feature type="region of interest" description="Disordered" evidence="1">
    <location>
        <begin position="234"/>
        <end position="261"/>
    </location>
</feature>
<feature type="region of interest" description="Disordered" evidence="1">
    <location>
        <begin position="294"/>
        <end position="397"/>
    </location>
</feature>
<feature type="compositionally biased region" description="Acidic residues" evidence="1">
    <location>
        <begin position="1"/>
        <end position="16"/>
    </location>
</feature>
<feature type="compositionally biased region" description="Basic and acidic residues" evidence="1">
    <location>
        <begin position="37"/>
        <end position="77"/>
    </location>
</feature>
<feature type="compositionally biased region" description="Basic and acidic residues" evidence="1">
    <location>
        <begin position="84"/>
        <end position="129"/>
    </location>
</feature>
<feature type="compositionally biased region" description="Basic and acidic residues" evidence="1">
    <location>
        <begin position="136"/>
        <end position="148"/>
    </location>
</feature>
<feature type="compositionally biased region" description="Basic and acidic residues" evidence="1">
    <location>
        <begin position="294"/>
        <end position="307"/>
    </location>
</feature>
<feature type="compositionally biased region" description="Basic and acidic residues" evidence="1">
    <location>
        <begin position="319"/>
        <end position="329"/>
    </location>
</feature>
<feature type="compositionally biased region" description="Acidic residues" evidence="1">
    <location>
        <begin position="331"/>
        <end position="397"/>
    </location>
</feature>
<feature type="splice variant" id="VSP_015189" description="In isoform 10." evidence="3">
    <location>
        <begin position="1"/>
        <end position="91"/>
    </location>
</feature>
<feature type="splice variant" id="VSP_015191" description="In isoform 6 and isoform 9." evidence="6">
    <location>
        <begin position="9"/>
        <end position="31"/>
    </location>
</feature>
<feature type="splice variant" id="VSP_015192" description="In isoform 2, isoform 3 and isoform 8." evidence="4 5">
    <location>
        <position position="9"/>
    </location>
</feature>
<feature type="splice variant" id="VSP_041843" description="In isoform 5 and isoform 12." evidence="7">
    <location>
        <position position="10"/>
    </location>
</feature>
<feature type="splice variant" id="VSP_015193" description="In isoform 7, isoform 8 and isoform 13." evidence="7">
    <location>
        <begin position="24"/>
        <end position="31"/>
    </location>
</feature>
<feature type="splice variant" id="VSP_015194" description="In isoform 3 and isoform 5." evidence="7">
    <original>K</original>
    <variation>KK</variation>
    <location>
        <position position="24"/>
    </location>
</feature>
<feature type="splice variant" id="VSP_041844" description="In isoform 12." evidence="8">
    <location>
        <begin position="25"/>
        <end position="31"/>
    </location>
</feature>
<feature type="splice variant" id="VSP_015195" description="In isoform 4, isoform 5 and isoform 12." evidence="7">
    <location>
        <position position="155"/>
    </location>
</feature>
<feature type="splice variant" id="VSP_015196" description="In isoform 9, isoform 11 and isoform 13." evidence="6">
    <original>WDEISKDSNEKIWNEKKEQYTGRQ</original>
    <variation>YNTVYAETLEKTWQERQERFTQRT</variation>
    <location>
        <begin position="288"/>
        <end position="311"/>
    </location>
</feature>
<feature type="sequence conflict" description="In Ref. 1; no nucleotide entry and 2; CAA38366." evidence="8" ref="1 2">
    <original>R</original>
    <variation>A</variation>
    <location>
        <position position="119"/>
    </location>
</feature>
<feature type="sequence conflict" description="In Ref. 1; no nucleotide entry and 2; CAA38366." evidence="8" ref="1 2">
    <original>G</original>
    <variation>A</variation>
    <location>
        <position position="193"/>
    </location>
</feature>
<feature type="sequence conflict" description="In Ref. 1; no nucleotide entry and 2; CAA38366." evidence="8" ref="1 2">
    <original>A</original>
    <variation>D</variation>
    <location>
        <position position="364"/>
    </location>
</feature>
<feature type="sequence conflict" description="In Ref. 8; ADR83716." evidence="8" ref="8">
    <original>S</original>
    <variation>SS</variation>
    <location sequence="P19351-5">
        <position position="9"/>
    </location>
</feature>
<comment type="function">
    <text evidence="2">Troponin T is the tropomyosin-binding subunit of troponin, the thin filament regulatory complex which confers calcium-sensitivity to striated muscle actomyosin ATPase activity.</text>
</comment>
<comment type="alternative products">
    <event type="alternative splicing"/>
    <isoform>
        <id>P19351-1</id>
        <name>1</name>
        <name>A</name>
        <sequence type="displayed"/>
    </isoform>
    <isoform>
        <id>P19351-2</id>
        <name>2</name>
        <name>T-2</name>
        <sequence type="described" ref="VSP_015192"/>
    </isoform>
    <isoform>
        <id>P19351-3</id>
        <name>3</name>
        <name>T-1</name>
        <sequence type="described" ref="VSP_015192 VSP_015194"/>
    </isoform>
    <isoform>
        <id>P19351-4</id>
        <name>4</name>
        <name>G</name>
        <sequence type="described" ref="VSP_015195"/>
    </isoform>
    <isoform>
        <id>P19351-5</id>
        <name>5</name>
        <name>K</name>
        <sequence type="described" ref="VSP_041843 VSP_015194 VSP_015195"/>
    </isoform>
    <isoform>
        <id>P19351-6</id>
        <name>6</name>
        <name>E</name>
        <name>T-4</name>
        <sequence type="described" ref="VSP_015191"/>
    </isoform>
    <isoform>
        <id>P19351-7</id>
        <name>7</name>
        <name>B</name>
        <sequence type="described" ref="VSP_015193"/>
    </isoform>
    <isoform>
        <id>P19351-8</id>
        <name>8</name>
        <name>T-3</name>
        <sequence type="described" ref="VSP_015192 VSP_015193"/>
    </isoform>
    <isoform>
        <id>P19351-9</id>
        <name>9</name>
        <name>T-5</name>
        <sequence type="described" ref="VSP_015191 VSP_015196"/>
    </isoform>
    <isoform>
        <id>P19351-10</id>
        <name>10</name>
        <name>D</name>
        <sequence type="described" ref="VSP_015189"/>
    </isoform>
    <isoform>
        <id>P19351-11</id>
        <name>11</name>
        <name>I</name>
        <sequence type="described" ref="VSP_015196"/>
    </isoform>
    <isoform>
        <id>P19351-12</id>
        <name>12</name>
        <name>L</name>
        <sequence type="described" ref="VSP_041843 VSP_041844 VSP_015195"/>
    </isoform>
    <isoform>
        <id>P19351-13</id>
        <name>13</name>
        <name>J</name>
        <sequence type="described" ref="VSP_015193 VSP_015196"/>
    </isoform>
</comment>
<comment type="tissue specificity">
    <text evidence="2">Isoform 3 is expressed in the hypoderm. Isoform 8 is expressed in the dorsal vessel. Isoform 6 is expressed in adult TDT muscle and isoform 9 in adult IFM, flight and jump muscles.</text>
</comment>
<comment type="developmental stage">
    <text>Isoform 2 is expressed only in larvae.</text>
</comment>
<comment type="PTM">
    <text>Some glutamate residues are polyglycylated by TTLL3B. This modification occurs exclusively on glutamate residues and results in polyglycine chains on the gamma-carboxyl group.</text>
</comment>
<comment type="disruption phenotype">
    <text evidence="2">Flies exhibit 3 distinct syndromes of myofibrillar abnormalities; elimination of thin filaments except where they are bound by electron-dense material presumed to be Z-disk proteins, degeneration of muscles and reduction in the diameter of the myofibril lattice.</text>
</comment>
<comment type="similarity">
    <text evidence="8">Belongs to the troponin T family.</text>
</comment>
<comment type="sequence caution" evidence="8">
    <conflict type="miscellaneous discrepancy">
        <sequence resource="EMBL-CDS" id="AAL48497"/>
    </conflict>
    <text>Intron retention.</text>
</comment>
<organism>
    <name type="scientific">Drosophila melanogaster</name>
    <name type="common">Fruit fly</name>
    <dbReference type="NCBI Taxonomy" id="7227"/>
    <lineage>
        <taxon>Eukaryota</taxon>
        <taxon>Metazoa</taxon>
        <taxon>Ecdysozoa</taxon>
        <taxon>Arthropoda</taxon>
        <taxon>Hexapoda</taxon>
        <taxon>Insecta</taxon>
        <taxon>Pterygota</taxon>
        <taxon>Neoptera</taxon>
        <taxon>Endopterygota</taxon>
        <taxon>Diptera</taxon>
        <taxon>Brachycera</taxon>
        <taxon>Muscomorpha</taxon>
        <taxon>Ephydroidea</taxon>
        <taxon>Drosophilidae</taxon>
        <taxon>Drosophila</taxon>
        <taxon>Sophophora</taxon>
    </lineage>
</organism>
<sequence length="397" mass="47448">MSDDEEYTSSEEEEVVEETREETKPPQTPAEGEGDPEFIKRQDQKRSDLDDQLKEYITEWRKQRSKEEDELKKLKEKQAKRKVTRAEEEQKMAQRKKEEEERRVREAEEKKQREIEEKRMRLEEAEKKRQAMLQAMKDKDKKGPNFTIAKKDAGVLGLSSAAMERNKTKEQLEEEKKISLSFRIKPLAIEGFGEAKLREKAQELWELIVKLETEKYDLEERQKRQDYDLKELKERQKQQLRHKALKKGLDPEALTGKYPPKIQVASKYERRVDTRSYDDKKKLFEGGWDEISKDSNEKIWNEKKEQYTGRQKSKLPKWFGERPGKKAGEPETPEGEEDAKADEDIVEDDEEVEEEVVEEEDEEAEEDEEEEEEEEEEEEEEEEEEEEEEEEEEEEEE</sequence>
<protein>
    <recommendedName>
        <fullName>Troponin T, skeletal muscle</fullName>
    </recommendedName>
    <alternativeName>
        <fullName>Protein intended thorax</fullName>
    </alternativeName>
    <alternativeName>
        <fullName>Protein upheld</fullName>
    </alternativeName>
</protein>
<proteinExistence type="evidence at protein level"/>
<keyword id="KW-0025">Alternative splicing</keyword>
<keyword id="KW-0514">Muscle protein</keyword>
<keyword id="KW-1185">Reference proteome</keyword>
<name>TNNT_DROME</name>
<dbReference type="EMBL" id="X54504">
    <property type="protein sequence ID" value="CAA38366.1"/>
    <property type="molecule type" value="mRNA"/>
</dbReference>
<dbReference type="EMBL" id="AY439172">
    <property type="protein sequence ID" value="AAR24583.1"/>
    <property type="molecule type" value="Genomic_DNA"/>
</dbReference>
<dbReference type="EMBL" id="AY439172">
    <property type="protein sequence ID" value="AAR24584.1"/>
    <property type="molecule type" value="Genomic_DNA"/>
</dbReference>
<dbReference type="EMBL" id="AY439172">
    <property type="protein sequence ID" value="AAR24585.1"/>
    <property type="molecule type" value="Genomic_DNA"/>
</dbReference>
<dbReference type="EMBL" id="AY439172">
    <property type="protein sequence ID" value="AAR24586.1"/>
    <property type="molecule type" value="Genomic_DNA"/>
</dbReference>
<dbReference type="EMBL" id="AY439172">
    <property type="protein sequence ID" value="AAR24587.1"/>
    <property type="molecule type" value="Genomic_DNA"/>
</dbReference>
<dbReference type="EMBL" id="AY665838">
    <property type="protein sequence ID" value="AAU09446.1"/>
    <property type="molecule type" value="mRNA"/>
</dbReference>
<dbReference type="EMBL" id="AE014298">
    <property type="protein sequence ID" value="AAF48288.2"/>
    <property type="molecule type" value="Genomic_DNA"/>
</dbReference>
<dbReference type="EMBL" id="AE014298">
    <property type="protein sequence ID" value="AAF48289.2"/>
    <property type="molecule type" value="Genomic_DNA"/>
</dbReference>
<dbReference type="EMBL" id="AE014298">
    <property type="protein sequence ID" value="AAF48290.1"/>
    <property type="molecule type" value="Genomic_DNA"/>
</dbReference>
<dbReference type="EMBL" id="AE014298">
    <property type="protein sequence ID" value="AAX52491.1"/>
    <property type="molecule type" value="Genomic_DNA"/>
</dbReference>
<dbReference type="EMBL" id="AE014298">
    <property type="protein sequence ID" value="AAX52492.1"/>
    <property type="molecule type" value="Genomic_DNA"/>
</dbReference>
<dbReference type="EMBL" id="AE014298">
    <property type="protein sequence ID" value="AAX52493.2"/>
    <property type="molecule type" value="Genomic_DNA"/>
</dbReference>
<dbReference type="EMBL" id="AE014298">
    <property type="protein sequence ID" value="ACZ95277.1"/>
    <property type="molecule type" value="Genomic_DNA"/>
</dbReference>
<dbReference type="EMBL" id="AE014298">
    <property type="protein sequence ID" value="ACZ95278.1"/>
    <property type="molecule type" value="Genomic_DNA"/>
</dbReference>
<dbReference type="EMBL" id="AE014298">
    <property type="protein sequence ID" value="ACZ95279.1"/>
    <property type="molecule type" value="Genomic_DNA"/>
</dbReference>
<dbReference type="EMBL" id="AY051989">
    <property type="protein sequence ID" value="AAK93413.1"/>
    <property type="molecule type" value="mRNA"/>
</dbReference>
<dbReference type="EMBL" id="AY070875">
    <property type="protein sequence ID" value="AAL48497.1"/>
    <property type="status" value="ALT_SEQ"/>
    <property type="molecule type" value="mRNA"/>
</dbReference>
<dbReference type="EMBL" id="BT125831">
    <property type="protein sequence ID" value="ADR83716.1"/>
    <property type="molecule type" value="mRNA"/>
</dbReference>
<dbReference type="EMBL" id="BT126178">
    <property type="protein sequence ID" value="ADZ99430.1"/>
    <property type="molecule type" value="mRNA"/>
</dbReference>
<dbReference type="PIR" id="S02708">
    <property type="entry name" value="S02708"/>
</dbReference>
<dbReference type="PIR" id="S13251">
    <property type="entry name" value="S13251"/>
</dbReference>
<dbReference type="RefSeq" id="NP_001014737.1">
    <molecule id="P19351-4"/>
    <property type="nucleotide sequence ID" value="NM_001014737.2"/>
</dbReference>
<dbReference type="RefSeq" id="NP_001014738.2">
    <molecule id="P19351-5"/>
    <property type="nucleotide sequence ID" value="NM_001014738.3"/>
</dbReference>
<dbReference type="RefSeq" id="NP_001014739.1">
    <molecule id="P19351-6"/>
    <property type="nucleotide sequence ID" value="NM_001014739.2"/>
</dbReference>
<dbReference type="RefSeq" id="NP_001162741.1">
    <molecule id="P19351-9"/>
    <property type="nucleotide sequence ID" value="NM_001169270.2"/>
</dbReference>
<dbReference type="RefSeq" id="NP_001162742.1">
    <molecule id="P19351-11"/>
    <property type="nucleotide sequence ID" value="NM_001169271.2"/>
</dbReference>
<dbReference type="RefSeq" id="NP_001162743.1">
    <molecule id="P19351-13"/>
    <property type="nucleotide sequence ID" value="NM_001169272.2"/>
</dbReference>
<dbReference type="RefSeq" id="NP_001162744.1">
    <molecule id="P19351-12"/>
    <property type="nucleotide sequence ID" value="NM_001169273.2"/>
</dbReference>
<dbReference type="RefSeq" id="NP_001259522.1">
    <molecule id="P19351-3"/>
    <property type="nucleotide sequence ID" value="NM_001272593.2"/>
</dbReference>
<dbReference type="RefSeq" id="NP_001259523.1">
    <molecule id="P19351-2"/>
    <property type="nucleotide sequence ID" value="NM_001272594.2"/>
</dbReference>
<dbReference type="RefSeq" id="NP_001259524.1">
    <molecule id="P19351-8"/>
    <property type="nucleotide sequence ID" value="NM_001272595.2"/>
</dbReference>
<dbReference type="RefSeq" id="NP_001285213.1">
    <molecule id="P19351-8"/>
    <property type="nucleotide sequence ID" value="NM_001298284.1"/>
</dbReference>
<dbReference type="RefSeq" id="NP_001285214.1">
    <molecule id="P19351-8"/>
    <property type="nucleotide sequence ID" value="NM_001298285.1"/>
</dbReference>
<dbReference type="RefSeq" id="NP_001285215.1">
    <molecule id="P19351-10"/>
    <property type="nucleotide sequence ID" value="NM_001298286.1"/>
</dbReference>
<dbReference type="RefSeq" id="NP_525088.2">
    <molecule id="P19351-1"/>
    <property type="nucleotide sequence ID" value="NM_080349.3"/>
</dbReference>
<dbReference type="RefSeq" id="NP_727718.1">
    <molecule id="P19351-7"/>
    <property type="nucleotide sequence ID" value="NM_167375.2"/>
</dbReference>
<dbReference type="RefSeq" id="NP_727719.1">
    <molecule id="P19351-10"/>
    <property type="nucleotide sequence ID" value="NM_167376.2"/>
</dbReference>
<dbReference type="SMR" id="P19351"/>
<dbReference type="BioGRID" id="58691">
    <property type="interactions" value="46"/>
</dbReference>
<dbReference type="FunCoup" id="P19351">
    <property type="interactions" value="12"/>
</dbReference>
<dbReference type="IntAct" id="P19351">
    <property type="interactions" value="92"/>
</dbReference>
<dbReference type="STRING" id="7227.FBpp0301821"/>
<dbReference type="PaxDb" id="7227-FBpp0073682"/>
<dbReference type="PeptideAtlas" id="P19351"/>
<dbReference type="DNASU" id="32314"/>
<dbReference type="EnsemblMetazoa" id="FBtr0073851">
    <molecule id="P19351-1"/>
    <property type="protein sequence ID" value="FBpp0073682"/>
    <property type="gene ID" value="FBgn0004169"/>
</dbReference>
<dbReference type="EnsemblMetazoa" id="FBtr0073852">
    <molecule id="P19351-7"/>
    <property type="protein sequence ID" value="FBpp0073683"/>
    <property type="gene ID" value="FBgn0004169"/>
</dbReference>
<dbReference type="EnsemblMetazoa" id="FBtr0073853">
    <molecule id="P19351-10"/>
    <property type="protein sequence ID" value="FBpp0073684"/>
    <property type="gene ID" value="FBgn0004169"/>
</dbReference>
<dbReference type="EnsemblMetazoa" id="FBtr0100561">
    <molecule id="P19351-6"/>
    <property type="protein sequence ID" value="FBpp0100013"/>
    <property type="gene ID" value="FBgn0004169"/>
</dbReference>
<dbReference type="EnsemblMetazoa" id="FBtr0100563">
    <molecule id="P19351-4"/>
    <property type="protein sequence ID" value="FBpp0100015"/>
    <property type="gene ID" value="FBgn0004169"/>
</dbReference>
<dbReference type="EnsemblMetazoa" id="FBtr0301919">
    <molecule id="P19351-9"/>
    <property type="protein sequence ID" value="FBpp0291133"/>
    <property type="gene ID" value="FBgn0004169"/>
</dbReference>
<dbReference type="EnsemblMetazoa" id="FBtr0301920">
    <molecule id="P19351-11"/>
    <property type="protein sequence ID" value="FBpp0291134"/>
    <property type="gene ID" value="FBgn0004169"/>
</dbReference>
<dbReference type="EnsemblMetazoa" id="FBtr0301921">
    <molecule id="P19351-13"/>
    <property type="protein sequence ID" value="FBpp0291135"/>
    <property type="gene ID" value="FBgn0004169"/>
</dbReference>
<dbReference type="EnsemblMetazoa" id="FBtr0301922">
    <molecule id="P19351-5"/>
    <property type="protein sequence ID" value="FBpp0291136"/>
    <property type="gene ID" value="FBgn0004169"/>
</dbReference>
<dbReference type="EnsemblMetazoa" id="FBtr0301923">
    <molecule id="P19351-12"/>
    <property type="protein sequence ID" value="FBpp0291137"/>
    <property type="gene ID" value="FBgn0004169"/>
</dbReference>
<dbReference type="EnsemblMetazoa" id="FBtr0310136">
    <molecule id="P19351-3"/>
    <property type="protein sequence ID" value="FBpp0301821"/>
    <property type="gene ID" value="FBgn0004169"/>
</dbReference>
<dbReference type="EnsemblMetazoa" id="FBtr0310137">
    <molecule id="P19351-2"/>
    <property type="protein sequence ID" value="FBpp0301822"/>
    <property type="gene ID" value="FBgn0004169"/>
</dbReference>
<dbReference type="EnsemblMetazoa" id="FBtr0310138">
    <molecule id="P19351-8"/>
    <property type="protein sequence ID" value="FBpp0301823"/>
    <property type="gene ID" value="FBgn0004169"/>
</dbReference>
<dbReference type="EnsemblMetazoa" id="FBtr0340617">
    <molecule id="P19351-8"/>
    <property type="protein sequence ID" value="FBpp0309481"/>
    <property type="gene ID" value="FBgn0004169"/>
</dbReference>
<dbReference type="EnsemblMetazoa" id="FBtr0340618">
    <molecule id="P19351-8"/>
    <property type="protein sequence ID" value="FBpp0309482"/>
    <property type="gene ID" value="FBgn0004169"/>
</dbReference>
<dbReference type="EnsemblMetazoa" id="FBtr0345131">
    <molecule id="P19351-10"/>
    <property type="protein sequence ID" value="FBpp0311352"/>
    <property type="gene ID" value="FBgn0004169"/>
</dbReference>
<dbReference type="GeneID" id="32314"/>
<dbReference type="KEGG" id="dme:Dmel_CG7107"/>
<dbReference type="AGR" id="FB:FBgn0004169"/>
<dbReference type="CTD" id="104073"/>
<dbReference type="FlyBase" id="FBgn0004169">
    <property type="gene designation" value="up"/>
</dbReference>
<dbReference type="VEuPathDB" id="VectorBase:FBgn0004169"/>
<dbReference type="eggNOG" id="KOG3634">
    <property type="taxonomic scope" value="Eukaryota"/>
</dbReference>
<dbReference type="GeneTree" id="ENSGT00730000112220"/>
<dbReference type="InParanoid" id="P19351"/>
<dbReference type="OMA" id="WGRRENE"/>
<dbReference type="OrthoDB" id="330499at2759"/>
<dbReference type="PhylomeDB" id="P19351"/>
<dbReference type="SignaLink" id="P19351"/>
<dbReference type="BioGRID-ORCS" id="32314">
    <property type="hits" value="0 hits in 3 CRISPR screens"/>
</dbReference>
<dbReference type="ChiTaRS" id="up">
    <property type="organism name" value="fly"/>
</dbReference>
<dbReference type="GenomeRNAi" id="32314"/>
<dbReference type="PRO" id="PR:P19351"/>
<dbReference type="Proteomes" id="UP000000803">
    <property type="component" value="Chromosome X"/>
</dbReference>
<dbReference type="Bgee" id="FBgn0004169">
    <property type="expression patterns" value="Expressed in visceral muscle cell in digestive tract and 124 other cell types or tissues"/>
</dbReference>
<dbReference type="ExpressionAtlas" id="P19351">
    <property type="expression patterns" value="baseline and differential"/>
</dbReference>
<dbReference type="GO" id="GO:0005865">
    <property type="term" value="C:striated muscle thin filament"/>
    <property type="evidence" value="ECO:0000314"/>
    <property type="project" value="FlyBase"/>
</dbReference>
<dbReference type="GO" id="GO:0005861">
    <property type="term" value="C:troponin complex"/>
    <property type="evidence" value="ECO:0000314"/>
    <property type="project" value="FlyBase"/>
</dbReference>
<dbReference type="GO" id="GO:0005509">
    <property type="term" value="F:calcium ion binding"/>
    <property type="evidence" value="ECO:0000314"/>
    <property type="project" value="FlyBase"/>
</dbReference>
<dbReference type="GO" id="GO:0005523">
    <property type="term" value="F:tropomyosin binding"/>
    <property type="evidence" value="ECO:0000314"/>
    <property type="project" value="FlyBase"/>
</dbReference>
<dbReference type="GO" id="GO:0006874">
    <property type="term" value="P:intracellular calcium ion homeostasis"/>
    <property type="evidence" value="ECO:0000315"/>
    <property type="project" value="FlyBase"/>
</dbReference>
<dbReference type="GO" id="GO:0007498">
    <property type="term" value="P:mesoderm development"/>
    <property type="evidence" value="ECO:0000270"/>
    <property type="project" value="FlyBase"/>
</dbReference>
<dbReference type="GO" id="GO:0007005">
    <property type="term" value="P:mitochondrion organization"/>
    <property type="evidence" value="ECO:0000315"/>
    <property type="project" value="FlyBase"/>
</dbReference>
<dbReference type="GO" id="GO:0046716">
    <property type="term" value="P:muscle cell cellular homeostasis"/>
    <property type="evidence" value="ECO:0000315"/>
    <property type="project" value="FlyBase"/>
</dbReference>
<dbReference type="GO" id="GO:0006936">
    <property type="term" value="P:muscle contraction"/>
    <property type="evidence" value="ECO:0000318"/>
    <property type="project" value="GO_Central"/>
</dbReference>
<dbReference type="GO" id="GO:0048644">
    <property type="term" value="P:muscle organ morphogenesis"/>
    <property type="evidence" value="ECO:0000315"/>
    <property type="project" value="FlyBase"/>
</dbReference>
<dbReference type="GO" id="GO:0071689">
    <property type="term" value="P:muscle thin filament assembly"/>
    <property type="evidence" value="ECO:0000315"/>
    <property type="project" value="FlyBase"/>
</dbReference>
<dbReference type="GO" id="GO:0030239">
    <property type="term" value="P:myofibril assembly"/>
    <property type="evidence" value="ECO:0000315"/>
    <property type="project" value="FlyBase"/>
</dbReference>
<dbReference type="GO" id="GO:0010882">
    <property type="term" value="P:regulation of cardiac muscle contraction by calcium ion signaling"/>
    <property type="evidence" value="ECO:0000315"/>
    <property type="project" value="FlyBase"/>
</dbReference>
<dbReference type="GO" id="GO:0045214">
    <property type="term" value="P:sarcomere organization"/>
    <property type="evidence" value="ECO:0000315"/>
    <property type="project" value="FlyBase"/>
</dbReference>
<dbReference type="FunFam" id="1.20.5.350:FF:000003">
    <property type="entry name" value="Troponin T isoform 5"/>
    <property type="match status" value="1"/>
</dbReference>
<dbReference type="Gene3D" id="1.20.5.350">
    <property type="match status" value="1"/>
</dbReference>
<dbReference type="InterPro" id="IPR027707">
    <property type="entry name" value="TNNT"/>
</dbReference>
<dbReference type="InterPro" id="IPR001978">
    <property type="entry name" value="Troponin"/>
</dbReference>
<dbReference type="InterPro" id="IPR038077">
    <property type="entry name" value="Troponin_sf"/>
</dbReference>
<dbReference type="PANTHER" id="PTHR11521">
    <property type="entry name" value="TROPONIN T"/>
    <property type="match status" value="1"/>
</dbReference>
<dbReference type="PANTHER" id="PTHR11521:SF1">
    <property type="entry name" value="TROPONIN T, SKELETAL MUSCLE"/>
    <property type="match status" value="1"/>
</dbReference>
<dbReference type="Pfam" id="PF00992">
    <property type="entry name" value="Troponin"/>
    <property type="match status" value="1"/>
</dbReference>
<dbReference type="SUPFAM" id="SSF90250">
    <property type="entry name" value="Troponin coil-coiled subunits"/>
    <property type="match status" value="1"/>
</dbReference>
<reference key="1">
    <citation type="journal article" date="1988" name="J. Mol. Biol.">
        <title>Troponin of asynchronous flight muscle.</title>
        <authorList>
            <person name="Bullard B."/>
            <person name="Leonard K."/>
            <person name="Larkins A."/>
            <person name="Butcher G."/>
            <person name="Karlik C."/>
            <person name="Fyrberg E.A."/>
        </authorList>
    </citation>
    <scope>NUCLEOTIDE SEQUENCE [MRNA] (ISOFORM 2)</scope>
    <source>
        <strain>Canton-S</strain>
        <tissue>Asynchronous muscle</tissue>
    </source>
</reference>
<reference key="2">
    <citation type="journal article" date="1990" name="J. Mol. Biol.">
        <title>Drosophila melanogaster troponin-T mutations engender three distinct syndromes of myofibrillar abnormalities.</title>
        <authorList>
            <person name="Fryberg E.A."/>
            <person name="Fryberg C.C."/>
            <person name="Beall C."/>
            <person name="Saville D.L."/>
        </authorList>
    </citation>
    <scope>NUCLEOTIDE SEQUENCE [MRNA] (ISOFORM 2)</scope>
    <scope>SEQUENCE REVISION</scope>
    <scope>FUNCTION</scope>
    <scope>TISSUE SPECIFICITY</scope>
    <scope>DISRUPTION PHENOTYPE</scope>
    <source>
        <strain>Canton-S</strain>
    </source>
</reference>
<reference key="3">
    <citation type="thesis" date="2003" institute="Universidad Autonoma de Madrid (UAM)" country="Spain">
        <title>Gene evolution of the troponin complex in insects.</title>
        <authorList>
            <person name="Herranz-Barranco R."/>
        </authorList>
    </citation>
    <scope>NUCLEOTIDE SEQUENCE [GENOMIC DNA]</scope>
    <scope>ALTERNATIVE SPLICING</scope>
</reference>
<reference key="4">
    <citation type="submission" date="2004-06" db="EMBL/GenBank/DDBJ databases">
        <title>Drosophila TpnT exon 10 is alternatively spliced.</title>
        <authorList>
            <person name="Nongthomba U."/>
            <person name="Ansari M."/>
            <person name="Sparrow J."/>
        </authorList>
    </citation>
    <scope>NUCLEOTIDE SEQUENCE [MRNA] (ISOFORM 9)</scope>
</reference>
<reference key="5">
    <citation type="journal article" date="2000" name="Science">
        <title>The genome sequence of Drosophila melanogaster.</title>
        <authorList>
            <person name="Adams M.D."/>
            <person name="Celniker S.E."/>
            <person name="Holt R.A."/>
            <person name="Evans C.A."/>
            <person name="Gocayne J.D."/>
            <person name="Amanatides P.G."/>
            <person name="Scherer S.E."/>
            <person name="Li P.W."/>
            <person name="Hoskins R.A."/>
            <person name="Galle R.F."/>
            <person name="George R.A."/>
            <person name="Lewis S.E."/>
            <person name="Richards S."/>
            <person name="Ashburner M."/>
            <person name="Henderson S.N."/>
            <person name="Sutton G.G."/>
            <person name="Wortman J.R."/>
            <person name="Yandell M.D."/>
            <person name="Zhang Q."/>
            <person name="Chen L.X."/>
            <person name="Brandon R.C."/>
            <person name="Rogers Y.-H.C."/>
            <person name="Blazej R.G."/>
            <person name="Champe M."/>
            <person name="Pfeiffer B.D."/>
            <person name="Wan K.H."/>
            <person name="Doyle C."/>
            <person name="Baxter E.G."/>
            <person name="Helt G."/>
            <person name="Nelson C.R."/>
            <person name="Miklos G.L.G."/>
            <person name="Abril J.F."/>
            <person name="Agbayani A."/>
            <person name="An H.-J."/>
            <person name="Andrews-Pfannkoch C."/>
            <person name="Baldwin D."/>
            <person name="Ballew R.M."/>
            <person name="Basu A."/>
            <person name="Baxendale J."/>
            <person name="Bayraktaroglu L."/>
            <person name="Beasley E.M."/>
            <person name="Beeson K.Y."/>
            <person name="Benos P.V."/>
            <person name="Berman B.P."/>
            <person name="Bhandari D."/>
            <person name="Bolshakov S."/>
            <person name="Borkova D."/>
            <person name="Botchan M.R."/>
            <person name="Bouck J."/>
            <person name="Brokstein P."/>
            <person name="Brottier P."/>
            <person name="Burtis K.C."/>
            <person name="Busam D.A."/>
            <person name="Butler H."/>
            <person name="Cadieu E."/>
            <person name="Center A."/>
            <person name="Chandra I."/>
            <person name="Cherry J.M."/>
            <person name="Cawley S."/>
            <person name="Dahlke C."/>
            <person name="Davenport L.B."/>
            <person name="Davies P."/>
            <person name="de Pablos B."/>
            <person name="Delcher A."/>
            <person name="Deng Z."/>
            <person name="Mays A.D."/>
            <person name="Dew I."/>
            <person name="Dietz S.M."/>
            <person name="Dodson K."/>
            <person name="Doup L.E."/>
            <person name="Downes M."/>
            <person name="Dugan-Rocha S."/>
            <person name="Dunkov B.C."/>
            <person name="Dunn P."/>
            <person name="Durbin K.J."/>
            <person name="Evangelista C.C."/>
            <person name="Ferraz C."/>
            <person name="Ferriera S."/>
            <person name="Fleischmann W."/>
            <person name="Fosler C."/>
            <person name="Gabrielian A.E."/>
            <person name="Garg N.S."/>
            <person name="Gelbart W.M."/>
            <person name="Glasser K."/>
            <person name="Glodek A."/>
            <person name="Gong F."/>
            <person name="Gorrell J.H."/>
            <person name="Gu Z."/>
            <person name="Guan P."/>
            <person name="Harris M."/>
            <person name="Harris N.L."/>
            <person name="Harvey D.A."/>
            <person name="Heiman T.J."/>
            <person name="Hernandez J.R."/>
            <person name="Houck J."/>
            <person name="Hostin D."/>
            <person name="Houston K.A."/>
            <person name="Howland T.J."/>
            <person name="Wei M.-H."/>
            <person name="Ibegwam C."/>
            <person name="Jalali M."/>
            <person name="Kalush F."/>
            <person name="Karpen G.H."/>
            <person name="Ke Z."/>
            <person name="Kennison J.A."/>
            <person name="Ketchum K.A."/>
            <person name="Kimmel B.E."/>
            <person name="Kodira C.D."/>
            <person name="Kraft C.L."/>
            <person name="Kravitz S."/>
            <person name="Kulp D."/>
            <person name="Lai Z."/>
            <person name="Lasko P."/>
            <person name="Lei Y."/>
            <person name="Levitsky A.A."/>
            <person name="Li J.H."/>
            <person name="Li Z."/>
            <person name="Liang Y."/>
            <person name="Lin X."/>
            <person name="Liu X."/>
            <person name="Mattei B."/>
            <person name="McIntosh T.C."/>
            <person name="McLeod M.P."/>
            <person name="McPherson D."/>
            <person name="Merkulov G."/>
            <person name="Milshina N.V."/>
            <person name="Mobarry C."/>
            <person name="Morris J."/>
            <person name="Moshrefi A."/>
            <person name="Mount S.M."/>
            <person name="Moy M."/>
            <person name="Murphy B."/>
            <person name="Murphy L."/>
            <person name="Muzny D.M."/>
            <person name="Nelson D.L."/>
            <person name="Nelson D.R."/>
            <person name="Nelson K.A."/>
            <person name="Nixon K."/>
            <person name="Nusskern D.R."/>
            <person name="Pacleb J.M."/>
            <person name="Palazzolo M."/>
            <person name="Pittman G.S."/>
            <person name="Pan S."/>
            <person name="Pollard J."/>
            <person name="Puri V."/>
            <person name="Reese M.G."/>
            <person name="Reinert K."/>
            <person name="Remington K."/>
            <person name="Saunders R.D.C."/>
            <person name="Scheeler F."/>
            <person name="Shen H."/>
            <person name="Shue B.C."/>
            <person name="Siden-Kiamos I."/>
            <person name="Simpson M."/>
            <person name="Skupski M.P."/>
            <person name="Smith T.J."/>
            <person name="Spier E."/>
            <person name="Spradling A.C."/>
            <person name="Stapleton M."/>
            <person name="Strong R."/>
            <person name="Sun E."/>
            <person name="Svirskas R."/>
            <person name="Tector C."/>
            <person name="Turner R."/>
            <person name="Venter E."/>
            <person name="Wang A.H."/>
            <person name="Wang X."/>
            <person name="Wang Z.-Y."/>
            <person name="Wassarman D.A."/>
            <person name="Weinstock G.M."/>
            <person name="Weissenbach J."/>
            <person name="Williams S.M."/>
            <person name="Woodage T."/>
            <person name="Worley K.C."/>
            <person name="Wu D."/>
            <person name="Yang S."/>
            <person name="Yao Q.A."/>
            <person name="Ye J."/>
            <person name="Yeh R.-F."/>
            <person name="Zaveri J.S."/>
            <person name="Zhan M."/>
            <person name="Zhang G."/>
            <person name="Zhao Q."/>
            <person name="Zheng L."/>
            <person name="Zheng X.H."/>
            <person name="Zhong F.N."/>
            <person name="Zhong W."/>
            <person name="Zhou X."/>
            <person name="Zhu S.C."/>
            <person name="Zhu X."/>
            <person name="Smith H.O."/>
            <person name="Gibbs R.A."/>
            <person name="Myers E.W."/>
            <person name="Rubin G.M."/>
            <person name="Venter J.C."/>
        </authorList>
    </citation>
    <scope>NUCLEOTIDE SEQUENCE [LARGE SCALE GENOMIC DNA]</scope>
    <source>
        <strain>Berkeley</strain>
    </source>
</reference>
<reference key="6">
    <citation type="journal article" date="2002" name="Genome Biol.">
        <title>Annotation of the Drosophila melanogaster euchromatic genome: a systematic review.</title>
        <authorList>
            <person name="Misra S."/>
            <person name="Crosby M.A."/>
            <person name="Mungall C.J."/>
            <person name="Matthews B.B."/>
            <person name="Campbell K.S."/>
            <person name="Hradecky P."/>
            <person name="Huang Y."/>
            <person name="Kaminker J.S."/>
            <person name="Millburn G.H."/>
            <person name="Prochnik S.E."/>
            <person name="Smith C.D."/>
            <person name="Tupy J.L."/>
            <person name="Whitfield E.J."/>
            <person name="Bayraktaroglu L."/>
            <person name="Berman B.P."/>
            <person name="Bettencourt B.R."/>
            <person name="Celniker S.E."/>
            <person name="de Grey A.D.N.J."/>
            <person name="Drysdale R.A."/>
            <person name="Harris N.L."/>
            <person name="Richter J."/>
            <person name="Russo S."/>
            <person name="Schroeder A.J."/>
            <person name="Shu S.Q."/>
            <person name="Stapleton M."/>
            <person name="Yamada C."/>
            <person name="Ashburner M."/>
            <person name="Gelbart W.M."/>
            <person name="Rubin G.M."/>
            <person name="Lewis S.E."/>
        </authorList>
    </citation>
    <scope>GENOME REANNOTATION</scope>
    <scope>ALTERNATIVE SPLICING</scope>
    <source>
        <strain>Berkeley</strain>
    </source>
</reference>
<reference key="7">
    <citation type="journal article" date="2002" name="Genome Biol.">
        <title>A Drosophila full-length cDNA resource.</title>
        <authorList>
            <person name="Stapleton M."/>
            <person name="Carlson J.W."/>
            <person name="Brokstein P."/>
            <person name="Yu C."/>
            <person name="Champe M."/>
            <person name="George R.A."/>
            <person name="Guarin H."/>
            <person name="Kronmiller B."/>
            <person name="Pacleb J.M."/>
            <person name="Park S."/>
            <person name="Wan K.H."/>
            <person name="Rubin G.M."/>
            <person name="Celniker S.E."/>
        </authorList>
    </citation>
    <scope>NUCLEOTIDE SEQUENCE [LARGE SCALE MRNA] (ISOFORM 10)</scope>
    <scope>NUCLEOTIDE SEQUENCE [LARGE SCALE MRNA] OF 1-8 (ISOFORMS 2/3/6/8/9)</scope>
    <source>
        <strain>Berkeley</strain>
        <tissue>Embryo</tissue>
    </source>
</reference>
<reference key="8">
    <citation type="submission" date="2011-03" db="EMBL/GenBank/DDBJ databases">
        <authorList>
            <person name="Carlson J."/>
            <person name="Booth B."/>
            <person name="Frise E."/>
            <person name="Park S."/>
            <person name="Wan K."/>
            <person name="Yu C."/>
            <person name="Celniker S."/>
        </authorList>
    </citation>
    <scope>NUCLEOTIDE SEQUENCE [LARGE SCALE MRNA] (ISOFORMS 5 AND 7)</scope>
    <source>
        <strain>Berkeley</strain>
        <tissue>Embryo</tissue>
    </source>
</reference>
<reference key="9">
    <citation type="journal article" date="2009" name="Cell">
        <title>Evolutionary divergence of enzymatic mechanisms for posttranslational polyglycylation.</title>
        <authorList>
            <person name="Rogowski K."/>
            <person name="Juge F."/>
            <person name="van Dijk J."/>
            <person name="Wloga D."/>
            <person name="Strub J.-M."/>
            <person name="Levilliers N."/>
            <person name="Thomas D."/>
            <person name="Bre M.-H."/>
            <person name="Van Dorsselaer A."/>
            <person name="Gaertig J."/>
            <person name="Janke C."/>
        </authorList>
    </citation>
    <scope>GLYCYLATION</scope>
</reference>
<gene>
    <name type="primary">up</name>
    <name type="synonym">int</name>
    <name type="ORF">CG7107</name>
</gene>